<name>RS16_CORU7</name>
<reference key="1">
    <citation type="journal article" date="2008" name="J. Biotechnol.">
        <title>The lifestyle of Corynebacterium urealyticum derived from its complete genome sequence established by pyrosequencing.</title>
        <authorList>
            <person name="Tauch A."/>
            <person name="Trost E."/>
            <person name="Tilker A."/>
            <person name="Ludewig U."/>
            <person name="Schneiker S."/>
            <person name="Goesmann A."/>
            <person name="Arnold W."/>
            <person name="Bekel T."/>
            <person name="Brinkrolf K."/>
            <person name="Brune I."/>
            <person name="Goetker S."/>
            <person name="Kalinowski J."/>
            <person name="Kamp P.-B."/>
            <person name="Lobo F.P."/>
            <person name="Viehoever P."/>
            <person name="Weisshaar B."/>
            <person name="Soriano F."/>
            <person name="Droege M."/>
            <person name="Puehler A."/>
        </authorList>
    </citation>
    <scope>NUCLEOTIDE SEQUENCE [LARGE SCALE GENOMIC DNA]</scope>
    <source>
        <strain>ATCC 43042 / DSM 7109</strain>
    </source>
</reference>
<evidence type="ECO:0000255" key="1">
    <source>
        <dbReference type="HAMAP-Rule" id="MF_00385"/>
    </source>
</evidence>
<evidence type="ECO:0000256" key="2">
    <source>
        <dbReference type="SAM" id="MobiDB-lite"/>
    </source>
</evidence>
<evidence type="ECO:0000305" key="3"/>
<gene>
    <name evidence="1" type="primary">rpsP</name>
    <name type="ordered locus">cu0799</name>
</gene>
<feature type="chain" id="PRO_1000196377" description="Small ribosomal subunit protein bS16">
    <location>
        <begin position="1"/>
        <end position="169"/>
    </location>
</feature>
<feature type="region of interest" description="Disordered" evidence="2">
    <location>
        <begin position="114"/>
        <end position="169"/>
    </location>
</feature>
<feature type="compositionally biased region" description="Basic and acidic residues" evidence="2">
    <location>
        <begin position="129"/>
        <end position="156"/>
    </location>
</feature>
<feature type="compositionally biased region" description="Acidic residues" evidence="2">
    <location>
        <begin position="159"/>
        <end position="169"/>
    </location>
</feature>
<proteinExistence type="inferred from homology"/>
<comment type="similarity">
    <text evidence="1">Belongs to the bacterial ribosomal protein bS16 family.</text>
</comment>
<organism>
    <name type="scientific">Corynebacterium urealyticum (strain ATCC 43042 / DSM 7109)</name>
    <dbReference type="NCBI Taxonomy" id="504474"/>
    <lineage>
        <taxon>Bacteria</taxon>
        <taxon>Bacillati</taxon>
        <taxon>Actinomycetota</taxon>
        <taxon>Actinomycetes</taxon>
        <taxon>Mycobacteriales</taxon>
        <taxon>Corynebacteriaceae</taxon>
        <taxon>Corynebacterium</taxon>
    </lineage>
</organism>
<keyword id="KW-1185">Reference proteome</keyword>
<keyword id="KW-0687">Ribonucleoprotein</keyword>
<keyword id="KW-0689">Ribosomal protein</keyword>
<accession>B1VG70</accession>
<dbReference type="EMBL" id="AM942444">
    <property type="protein sequence ID" value="CAQ04759.1"/>
    <property type="molecule type" value="Genomic_DNA"/>
</dbReference>
<dbReference type="RefSeq" id="WP_012360048.1">
    <property type="nucleotide sequence ID" value="NC_010545.1"/>
</dbReference>
<dbReference type="SMR" id="B1VG70"/>
<dbReference type="STRING" id="504474.cu0799"/>
<dbReference type="GeneID" id="60603577"/>
<dbReference type="KEGG" id="cur:cu0799"/>
<dbReference type="eggNOG" id="COG0228">
    <property type="taxonomic scope" value="Bacteria"/>
</dbReference>
<dbReference type="HOGENOM" id="CLU_100590_1_1_11"/>
<dbReference type="Proteomes" id="UP000001727">
    <property type="component" value="Chromosome"/>
</dbReference>
<dbReference type="GO" id="GO:0005737">
    <property type="term" value="C:cytoplasm"/>
    <property type="evidence" value="ECO:0007669"/>
    <property type="project" value="UniProtKB-ARBA"/>
</dbReference>
<dbReference type="GO" id="GO:0015935">
    <property type="term" value="C:small ribosomal subunit"/>
    <property type="evidence" value="ECO:0007669"/>
    <property type="project" value="TreeGrafter"/>
</dbReference>
<dbReference type="GO" id="GO:0003735">
    <property type="term" value="F:structural constituent of ribosome"/>
    <property type="evidence" value="ECO:0007669"/>
    <property type="project" value="InterPro"/>
</dbReference>
<dbReference type="GO" id="GO:0006412">
    <property type="term" value="P:translation"/>
    <property type="evidence" value="ECO:0007669"/>
    <property type="project" value="UniProtKB-UniRule"/>
</dbReference>
<dbReference type="Gene3D" id="3.30.1320.10">
    <property type="match status" value="1"/>
</dbReference>
<dbReference type="HAMAP" id="MF_00385">
    <property type="entry name" value="Ribosomal_bS16"/>
    <property type="match status" value="1"/>
</dbReference>
<dbReference type="InterPro" id="IPR000307">
    <property type="entry name" value="Ribosomal_bS16"/>
</dbReference>
<dbReference type="InterPro" id="IPR023803">
    <property type="entry name" value="Ribosomal_bS16_dom_sf"/>
</dbReference>
<dbReference type="NCBIfam" id="NF011093">
    <property type="entry name" value="PRK14520.1"/>
    <property type="match status" value="1"/>
</dbReference>
<dbReference type="NCBIfam" id="TIGR00002">
    <property type="entry name" value="S16"/>
    <property type="match status" value="1"/>
</dbReference>
<dbReference type="PANTHER" id="PTHR12919">
    <property type="entry name" value="30S RIBOSOMAL PROTEIN S16"/>
    <property type="match status" value="1"/>
</dbReference>
<dbReference type="PANTHER" id="PTHR12919:SF20">
    <property type="entry name" value="SMALL RIBOSOMAL SUBUNIT PROTEIN BS16M"/>
    <property type="match status" value="1"/>
</dbReference>
<dbReference type="Pfam" id="PF00886">
    <property type="entry name" value="Ribosomal_S16"/>
    <property type="match status" value="1"/>
</dbReference>
<dbReference type="SUPFAM" id="SSF54565">
    <property type="entry name" value="Ribosomal protein S16"/>
    <property type="match status" value="1"/>
</dbReference>
<sequence>MAVKIKLQRVGKIRTPQYRVVVQDARARRGGAVIENLGIYQPANQPSIIDINSERAQYWIGVGAQPTDTALALLKLTGDWQKAKGLEGGENTVKPQPEKKSKLDIFNEALAEAAEGPTAEAITEKRRKAKEEAEAKAAAEAEAAEKAEAEAAEKAAAEAAEESEEASAE</sequence>
<protein>
    <recommendedName>
        <fullName evidence="1">Small ribosomal subunit protein bS16</fullName>
    </recommendedName>
    <alternativeName>
        <fullName evidence="3">30S ribosomal protein S16</fullName>
    </alternativeName>
</protein>